<reference key="1">
    <citation type="submission" date="2006-02" db="EMBL/GenBank/DDBJ databases">
        <title>Complete sequence of chromosome of Rhodoferax ferrireducens DSM 15236.</title>
        <authorList>
            <person name="Copeland A."/>
            <person name="Lucas S."/>
            <person name="Lapidus A."/>
            <person name="Barry K."/>
            <person name="Detter J.C."/>
            <person name="Glavina del Rio T."/>
            <person name="Hammon N."/>
            <person name="Israni S."/>
            <person name="Pitluck S."/>
            <person name="Brettin T."/>
            <person name="Bruce D."/>
            <person name="Han C."/>
            <person name="Tapia R."/>
            <person name="Gilna P."/>
            <person name="Kiss H."/>
            <person name="Schmutz J."/>
            <person name="Larimer F."/>
            <person name="Land M."/>
            <person name="Kyrpides N."/>
            <person name="Ivanova N."/>
            <person name="Richardson P."/>
        </authorList>
    </citation>
    <scope>NUCLEOTIDE SEQUENCE [LARGE SCALE GENOMIC DNA]</scope>
    <source>
        <strain>ATCC BAA-621 / DSM 15236 / T118</strain>
    </source>
</reference>
<sequence length="204" mass="22118">MALKEIVEQTVAGLGYDLVEIERSAGGLLRITIDLPWVPGTAGSEAEQFVTVEDCEKVTRQLLFALEVDGVDYKRLEVSSPGIDRPLRHGQDFERFVGREIDVTLKAPIGAAAGALVNATRKKFRGTLERTQSSNGESGVVPGWQIVWSDAPEVKPGQRVSKKRLPAPLQALGFTLDELKEARLAPIVSFKGRGAKAGTEPNLD</sequence>
<keyword id="KW-0963">Cytoplasm</keyword>
<keyword id="KW-1185">Reference proteome</keyword>
<keyword id="KW-0690">Ribosome biogenesis</keyword>
<feature type="chain" id="PRO_1000136792" description="Ribosome maturation factor RimP">
    <location>
        <begin position="1"/>
        <end position="204"/>
    </location>
</feature>
<protein>
    <recommendedName>
        <fullName evidence="1">Ribosome maturation factor RimP</fullName>
    </recommendedName>
</protein>
<gene>
    <name evidence="1" type="primary">rimP</name>
    <name type="ordered locus">Rfer_2132</name>
</gene>
<evidence type="ECO:0000255" key="1">
    <source>
        <dbReference type="HAMAP-Rule" id="MF_01077"/>
    </source>
</evidence>
<name>RIMP_ALBFT</name>
<dbReference type="EMBL" id="CP000267">
    <property type="protein sequence ID" value="ABD69856.1"/>
    <property type="molecule type" value="Genomic_DNA"/>
</dbReference>
<dbReference type="RefSeq" id="WP_011464424.1">
    <property type="nucleotide sequence ID" value="NC_007908.1"/>
</dbReference>
<dbReference type="SMR" id="Q21WJ7"/>
<dbReference type="STRING" id="338969.Rfer_2132"/>
<dbReference type="KEGG" id="rfr:Rfer_2132"/>
<dbReference type="eggNOG" id="COG0779">
    <property type="taxonomic scope" value="Bacteria"/>
</dbReference>
<dbReference type="HOGENOM" id="CLU_070525_1_0_4"/>
<dbReference type="OrthoDB" id="9805006at2"/>
<dbReference type="Proteomes" id="UP000008332">
    <property type="component" value="Chromosome"/>
</dbReference>
<dbReference type="GO" id="GO:0005829">
    <property type="term" value="C:cytosol"/>
    <property type="evidence" value="ECO:0007669"/>
    <property type="project" value="TreeGrafter"/>
</dbReference>
<dbReference type="GO" id="GO:0000028">
    <property type="term" value="P:ribosomal small subunit assembly"/>
    <property type="evidence" value="ECO:0007669"/>
    <property type="project" value="TreeGrafter"/>
</dbReference>
<dbReference type="GO" id="GO:0006412">
    <property type="term" value="P:translation"/>
    <property type="evidence" value="ECO:0007669"/>
    <property type="project" value="TreeGrafter"/>
</dbReference>
<dbReference type="CDD" id="cd01734">
    <property type="entry name" value="YlxS_C"/>
    <property type="match status" value="1"/>
</dbReference>
<dbReference type="Gene3D" id="3.30.300.70">
    <property type="entry name" value="RimP-like superfamily, N-terminal"/>
    <property type="match status" value="1"/>
</dbReference>
<dbReference type="HAMAP" id="MF_01077">
    <property type="entry name" value="RimP"/>
    <property type="match status" value="1"/>
</dbReference>
<dbReference type="InterPro" id="IPR003728">
    <property type="entry name" value="Ribosome_maturation_RimP"/>
</dbReference>
<dbReference type="InterPro" id="IPR028998">
    <property type="entry name" value="RimP_C"/>
</dbReference>
<dbReference type="InterPro" id="IPR036847">
    <property type="entry name" value="RimP_C_sf"/>
</dbReference>
<dbReference type="InterPro" id="IPR028989">
    <property type="entry name" value="RimP_N"/>
</dbReference>
<dbReference type="InterPro" id="IPR035956">
    <property type="entry name" value="RimP_N_sf"/>
</dbReference>
<dbReference type="NCBIfam" id="NF000929">
    <property type="entry name" value="PRK00092.2-1"/>
    <property type="match status" value="1"/>
</dbReference>
<dbReference type="NCBIfam" id="NF011235">
    <property type="entry name" value="PRK14642.1"/>
    <property type="match status" value="1"/>
</dbReference>
<dbReference type="PANTHER" id="PTHR33867">
    <property type="entry name" value="RIBOSOME MATURATION FACTOR RIMP"/>
    <property type="match status" value="1"/>
</dbReference>
<dbReference type="PANTHER" id="PTHR33867:SF1">
    <property type="entry name" value="RIBOSOME MATURATION FACTOR RIMP"/>
    <property type="match status" value="1"/>
</dbReference>
<dbReference type="Pfam" id="PF02576">
    <property type="entry name" value="RimP_N"/>
    <property type="match status" value="1"/>
</dbReference>
<dbReference type="SUPFAM" id="SSF74942">
    <property type="entry name" value="YhbC-like, C-terminal domain"/>
    <property type="match status" value="1"/>
</dbReference>
<dbReference type="SUPFAM" id="SSF75420">
    <property type="entry name" value="YhbC-like, N-terminal domain"/>
    <property type="match status" value="1"/>
</dbReference>
<comment type="function">
    <text evidence="1">Required for maturation of 30S ribosomal subunits.</text>
</comment>
<comment type="subcellular location">
    <subcellularLocation>
        <location evidence="1">Cytoplasm</location>
    </subcellularLocation>
</comment>
<comment type="similarity">
    <text evidence="1">Belongs to the RimP family.</text>
</comment>
<accession>Q21WJ7</accession>
<proteinExistence type="inferred from homology"/>
<organism>
    <name type="scientific">Albidiferax ferrireducens (strain ATCC BAA-621 / DSM 15236 / T118)</name>
    <name type="common">Rhodoferax ferrireducens</name>
    <dbReference type="NCBI Taxonomy" id="338969"/>
    <lineage>
        <taxon>Bacteria</taxon>
        <taxon>Pseudomonadati</taxon>
        <taxon>Pseudomonadota</taxon>
        <taxon>Betaproteobacteria</taxon>
        <taxon>Burkholderiales</taxon>
        <taxon>Comamonadaceae</taxon>
        <taxon>Rhodoferax</taxon>
    </lineage>
</organism>